<accession>P96122</accession>
<accession>O83200</accession>
<feature type="chain" id="PRO_0000164451" description="5'-methylthioadenosine/S-adenosylhomocysteine nucleosidase">
    <location>
        <begin position="1"/>
        <end position="269"/>
    </location>
</feature>
<feature type="active site" description="Proton acceptor" evidence="1">
    <location>
        <position position="12"/>
    </location>
</feature>
<feature type="active site" description="Proton donor" evidence="1">
    <location>
        <position position="218"/>
    </location>
</feature>
<feature type="binding site" evidence="1">
    <location>
        <position position="77"/>
    </location>
    <ligand>
        <name>substrate</name>
    </ligand>
</feature>
<feature type="binding site" evidence="1">
    <location>
        <position position="174"/>
    </location>
    <ligand>
        <name>substrate</name>
    </ligand>
</feature>
<feature type="binding site" evidence="1">
    <location>
        <begin position="194"/>
        <end position="195"/>
    </location>
    <ligand>
        <name>substrate</name>
    </ligand>
</feature>
<feature type="sequence conflict" description="In Ref. 1; AAC45731." evidence="2" ref="1">
    <original>ALLTLRVLERLSALRTSVVASLFPMVVV</original>
    <variation>SPFDVACS</variation>
    <location>
        <begin position="242"/>
        <end position="269"/>
    </location>
</feature>
<keyword id="KW-0028">Amino-acid biosynthesis</keyword>
<keyword id="KW-0378">Hydrolase</keyword>
<keyword id="KW-0486">Methionine biosynthesis</keyword>
<keyword id="KW-1185">Reference proteome</keyword>
<protein>
    <recommendedName>
        <fullName evidence="1">5'-methylthioadenosine/S-adenosylhomocysteine nucleosidase</fullName>
        <shortName evidence="1">MTA/SAH nucleosidase</shortName>
        <shortName evidence="1">MTAN</shortName>
        <ecNumber evidence="1">3.2.2.9</ecNumber>
    </recommendedName>
    <alternativeName>
        <fullName evidence="1">5'-deoxyadenosine nucleosidase</fullName>
        <shortName evidence="1">DOA nucleosidase</shortName>
        <shortName evidence="1">dAdo nucleosidase</shortName>
    </alternativeName>
    <alternativeName>
        <fullName evidence="1">5'-methylthioadenosine nucleosidase</fullName>
        <shortName evidence="1">MTA nucleosidase</shortName>
    </alternativeName>
    <alternativeName>
        <fullName evidence="1">S-adenosylhomocysteine nucleosidase</fullName>
        <shortName evidence="1">AdoHcy nucleosidase</shortName>
        <shortName evidence="1">SAH nucleosidase</shortName>
        <shortName evidence="1">SRH nucleosidase</shortName>
    </alternativeName>
</protein>
<organism>
    <name type="scientific">Treponema pallidum (strain Nichols)</name>
    <dbReference type="NCBI Taxonomy" id="243276"/>
    <lineage>
        <taxon>Bacteria</taxon>
        <taxon>Pseudomonadati</taxon>
        <taxon>Spirochaetota</taxon>
        <taxon>Spirochaetia</taxon>
        <taxon>Spirochaetales</taxon>
        <taxon>Treponemataceae</taxon>
        <taxon>Treponema</taxon>
    </lineage>
</organism>
<proteinExistence type="inferred from homology"/>
<comment type="function">
    <text evidence="1">Catalyzes the irreversible cleavage of the glycosidic bond in both 5'-methylthioadenosine (MTA) and S-adenosylhomocysteine (SAH/AdoHcy) to adenine and the corresponding thioribose, 5'-methylthioribose and S-ribosylhomocysteine, respectively. Also cleaves 5'-deoxyadenosine, a toxic by-product of radical S-adenosylmethionine (SAM) enzymes, into 5-deoxyribose and adenine.</text>
</comment>
<comment type="catalytic activity">
    <reaction evidence="1">
        <text>S-adenosyl-L-homocysteine + H2O = S-(5-deoxy-D-ribos-5-yl)-L-homocysteine + adenine</text>
        <dbReference type="Rhea" id="RHEA:17805"/>
        <dbReference type="ChEBI" id="CHEBI:15377"/>
        <dbReference type="ChEBI" id="CHEBI:16708"/>
        <dbReference type="ChEBI" id="CHEBI:57856"/>
        <dbReference type="ChEBI" id="CHEBI:58195"/>
        <dbReference type="EC" id="3.2.2.9"/>
    </reaction>
</comment>
<comment type="catalytic activity">
    <reaction evidence="1">
        <text>S-methyl-5'-thioadenosine + H2O = 5-(methylsulfanyl)-D-ribose + adenine</text>
        <dbReference type="Rhea" id="RHEA:13617"/>
        <dbReference type="ChEBI" id="CHEBI:15377"/>
        <dbReference type="ChEBI" id="CHEBI:16708"/>
        <dbReference type="ChEBI" id="CHEBI:17509"/>
        <dbReference type="ChEBI" id="CHEBI:78440"/>
        <dbReference type="EC" id="3.2.2.9"/>
    </reaction>
</comment>
<comment type="catalytic activity">
    <reaction evidence="1">
        <text>5'-deoxyadenosine + H2O = 5-deoxy-D-ribose + adenine</text>
        <dbReference type="Rhea" id="RHEA:29859"/>
        <dbReference type="ChEBI" id="CHEBI:15377"/>
        <dbReference type="ChEBI" id="CHEBI:16708"/>
        <dbReference type="ChEBI" id="CHEBI:17319"/>
        <dbReference type="ChEBI" id="CHEBI:149540"/>
        <dbReference type="EC" id="3.2.2.9"/>
    </reaction>
    <physiologicalReaction direction="left-to-right" evidence="1">
        <dbReference type="Rhea" id="RHEA:29860"/>
    </physiologicalReaction>
</comment>
<comment type="pathway">
    <text evidence="1">Amino-acid biosynthesis; L-methionine biosynthesis via salvage pathway; S-methyl-5-thio-alpha-D-ribose 1-phosphate from S-methyl-5'-thioadenosine (hydrolase route): step 1/2.</text>
</comment>
<comment type="similarity">
    <text evidence="2">Belongs to the PNP/UDP phosphorylase family. MtnN subfamily.</text>
</comment>
<sequence>MTVGVFAALGEEVARVRECLGGVGTERAGLTFYVVSVGALQVVYVCGGVGKVNAALCTQLLISEFGARVLINTGIAGALDERLCVFDVLVSVDAVQHDVDVTAFGYQKGRIPRMDSVEWTANTALRYLVREAFDLCTRDPEWTEGACALSGSGDPPSRVSRLVEGRVASGDLFVSDAQTRARIIREFGAHGVEMEGAAFAHVASVNGVPFVIIRCISDGAGAEQDVSMSYKEFSTRAARRSALLTLRVLERLSALRTSVVASLFPMVVV</sequence>
<dbReference type="EC" id="3.2.2.9" evidence="1"/>
<dbReference type="EMBL" id="U55214">
    <property type="protein sequence ID" value="AAC45731.1"/>
    <property type="molecule type" value="Genomic_DNA"/>
</dbReference>
<dbReference type="EMBL" id="AE000520">
    <property type="protein sequence ID" value="AAC65159.1"/>
    <property type="molecule type" value="Genomic_DNA"/>
</dbReference>
<dbReference type="PIR" id="G71357">
    <property type="entry name" value="G71357"/>
</dbReference>
<dbReference type="RefSeq" id="WP_010881617.1">
    <property type="nucleotide sequence ID" value="NC_021490.2"/>
</dbReference>
<dbReference type="SMR" id="P96122"/>
<dbReference type="IntAct" id="P96122">
    <property type="interactions" value="3"/>
</dbReference>
<dbReference type="STRING" id="243276.TP_0170"/>
<dbReference type="EnsemblBacteria" id="AAC65159">
    <property type="protein sequence ID" value="AAC65159"/>
    <property type="gene ID" value="TP_0170"/>
</dbReference>
<dbReference type="KEGG" id="tpa:TP_0170"/>
<dbReference type="KEGG" id="tpw:TPANIC_0170"/>
<dbReference type="eggNOG" id="COG0775">
    <property type="taxonomic scope" value="Bacteria"/>
</dbReference>
<dbReference type="HOGENOM" id="CLU_031248_2_0_12"/>
<dbReference type="OrthoDB" id="9792278at2"/>
<dbReference type="UniPathway" id="UPA00904">
    <property type="reaction ID" value="UER00871"/>
</dbReference>
<dbReference type="Proteomes" id="UP000000811">
    <property type="component" value="Chromosome"/>
</dbReference>
<dbReference type="GO" id="GO:0005829">
    <property type="term" value="C:cytosol"/>
    <property type="evidence" value="ECO:0007669"/>
    <property type="project" value="TreeGrafter"/>
</dbReference>
<dbReference type="GO" id="GO:0008782">
    <property type="term" value="F:adenosylhomocysteine nucleosidase activity"/>
    <property type="evidence" value="ECO:0007669"/>
    <property type="project" value="UniProtKB-EC"/>
</dbReference>
<dbReference type="GO" id="GO:0008930">
    <property type="term" value="F:methylthioadenosine nucleosidase activity"/>
    <property type="evidence" value="ECO:0007669"/>
    <property type="project" value="InterPro"/>
</dbReference>
<dbReference type="GO" id="GO:0019509">
    <property type="term" value="P:L-methionine salvage from methylthioadenosine"/>
    <property type="evidence" value="ECO:0007669"/>
    <property type="project" value="UniProtKB-UniPathway"/>
</dbReference>
<dbReference type="GO" id="GO:0019284">
    <property type="term" value="P:L-methionine salvage from S-adenosylmethionine"/>
    <property type="evidence" value="ECO:0007669"/>
    <property type="project" value="TreeGrafter"/>
</dbReference>
<dbReference type="GO" id="GO:0009164">
    <property type="term" value="P:nucleoside catabolic process"/>
    <property type="evidence" value="ECO:0007669"/>
    <property type="project" value="InterPro"/>
</dbReference>
<dbReference type="CDD" id="cd09008">
    <property type="entry name" value="MTAN"/>
    <property type="match status" value="1"/>
</dbReference>
<dbReference type="Gene3D" id="3.40.50.1580">
    <property type="entry name" value="Nucleoside phosphorylase domain"/>
    <property type="match status" value="1"/>
</dbReference>
<dbReference type="InterPro" id="IPR010049">
    <property type="entry name" value="MTA_SAH_Nsdase"/>
</dbReference>
<dbReference type="InterPro" id="IPR000845">
    <property type="entry name" value="Nucleoside_phosphorylase_d"/>
</dbReference>
<dbReference type="InterPro" id="IPR035994">
    <property type="entry name" value="Nucleoside_phosphorylase_sf"/>
</dbReference>
<dbReference type="NCBIfam" id="TIGR01704">
    <property type="entry name" value="MTA_SAH-Nsdase"/>
    <property type="match status" value="1"/>
</dbReference>
<dbReference type="NCBIfam" id="NF004079">
    <property type="entry name" value="PRK05584.1"/>
    <property type="match status" value="1"/>
</dbReference>
<dbReference type="PANTHER" id="PTHR46832">
    <property type="entry name" value="5'-METHYLTHIOADENOSINE/S-ADENOSYLHOMOCYSTEINE NUCLEOSIDASE"/>
    <property type="match status" value="1"/>
</dbReference>
<dbReference type="PANTHER" id="PTHR46832:SF1">
    <property type="entry name" value="5'-METHYLTHIOADENOSINE_S-ADENOSYLHOMOCYSTEINE NUCLEOSIDASE"/>
    <property type="match status" value="1"/>
</dbReference>
<dbReference type="Pfam" id="PF01048">
    <property type="entry name" value="PNP_UDP_1"/>
    <property type="match status" value="1"/>
</dbReference>
<dbReference type="SUPFAM" id="SSF53167">
    <property type="entry name" value="Purine and uridine phosphorylases"/>
    <property type="match status" value="1"/>
</dbReference>
<gene>
    <name type="primary">mtnN</name>
    <name type="synonym">mtn</name>
    <name type="ordered locus">TP_0170</name>
</gene>
<reference key="1">
    <citation type="journal article" date="1997" name="Gene">
        <title>Identification and transcriptional analysis of a Treponema pallidum operon encoding a putative ABC transport system, an iron-activated repressor protein homolog, and a glycolytic pathway enzyme homolog.</title>
        <authorList>
            <person name="Hardham J.M."/>
            <person name="Stamm L.V."/>
            <person name="Porcella S.F."/>
            <person name="Frye J.G."/>
            <person name="Barnes N.Y."/>
            <person name="Howell J.K."/>
            <person name="Mueller S.L."/>
            <person name="Radolf J.D."/>
            <person name="Weinstock G.M."/>
            <person name="Norris S.J."/>
        </authorList>
    </citation>
    <scope>NUCLEOTIDE SEQUENCE [GENOMIC DNA]</scope>
</reference>
<reference key="2">
    <citation type="journal article" date="1998" name="Science">
        <title>Complete genome sequence of Treponema pallidum, the syphilis spirochete.</title>
        <authorList>
            <person name="Fraser C.M."/>
            <person name="Norris S.J."/>
            <person name="Weinstock G.M."/>
            <person name="White O."/>
            <person name="Sutton G.G."/>
            <person name="Dodson R.J."/>
            <person name="Gwinn M.L."/>
            <person name="Hickey E.K."/>
            <person name="Clayton R.A."/>
            <person name="Ketchum K.A."/>
            <person name="Sodergren E."/>
            <person name="Hardham J.M."/>
            <person name="McLeod M.P."/>
            <person name="Salzberg S.L."/>
            <person name="Peterson J.D."/>
            <person name="Khalak H.G."/>
            <person name="Richardson D.L."/>
            <person name="Howell J.K."/>
            <person name="Chidambaram M."/>
            <person name="Utterback T.R."/>
            <person name="McDonald L.A."/>
            <person name="Artiach P."/>
            <person name="Bowman C."/>
            <person name="Cotton M.D."/>
            <person name="Fujii C."/>
            <person name="Garland S.A."/>
            <person name="Hatch B."/>
            <person name="Horst K."/>
            <person name="Roberts K.M."/>
            <person name="Sandusky M."/>
            <person name="Weidman J.F."/>
            <person name="Smith H.O."/>
            <person name="Venter J.C."/>
        </authorList>
    </citation>
    <scope>NUCLEOTIDE SEQUENCE [LARGE SCALE GENOMIC DNA]</scope>
    <source>
        <strain>Nichols</strain>
    </source>
</reference>
<evidence type="ECO:0000250" key="1">
    <source>
        <dbReference type="UniProtKB" id="P0AF12"/>
    </source>
</evidence>
<evidence type="ECO:0000305" key="2"/>
<name>MTNN_TREPA</name>